<name>HSLO_BACC3</name>
<accession>C1ESZ7</accession>
<feature type="chain" id="PRO_1000119251" description="33 kDa chaperonin">
    <location>
        <begin position="1"/>
        <end position="291"/>
    </location>
</feature>
<feature type="disulfide bond" description="Redox-active" evidence="1">
    <location>
        <begin position="237"/>
        <end position="239"/>
    </location>
</feature>
<feature type="disulfide bond" description="Redox-active" evidence="1">
    <location>
        <begin position="270"/>
        <end position="273"/>
    </location>
</feature>
<reference key="1">
    <citation type="submission" date="2009-02" db="EMBL/GenBank/DDBJ databases">
        <title>Genome sequence of Bacillus cereus 03BB102.</title>
        <authorList>
            <person name="Dodson R.J."/>
            <person name="Jackson P."/>
            <person name="Munk A.C."/>
            <person name="Brettin T."/>
            <person name="Bruce D."/>
            <person name="Detter C."/>
            <person name="Tapia R."/>
            <person name="Han C."/>
            <person name="Sutton G."/>
            <person name="Sims D."/>
        </authorList>
    </citation>
    <scope>NUCLEOTIDE SEQUENCE [LARGE SCALE GENOMIC DNA]</scope>
    <source>
        <strain>03BB102</strain>
    </source>
</reference>
<proteinExistence type="inferred from homology"/>
<gene>
    <name evidence="1" type="primary">hslO</name>
    <name type="ordered locus">BCA_0079</name>
</gene>
<protein>
    <recommendedName>
        <fullName evidence="1">33 kDa chaperonin</fullName>
    </recommendedName>
    <alternativeName>
        <fullName evidence="1">Heat shock protein 33 homolog</fullName>
        <shortName evidence="1">HSP33</shortName>
    </alternativeName>
</protein>
<keyword id="KW-0143">Chaperone</keyword>
<keyword id="KW-0963">Cytoplasm</keyword>
<keyword id="KW-1015">Disulfide bond</keyword>
<keyword id="KW-0676">Redox-active center</keyword>
<keyword id="KW-0862">Zinc</keyword>
<dbReference type="EMBL" id="CP001407">
    <property type="protein sequence ID" value="ACO29526.1"/>
    <property type="molecule type" value="Genomic_DNA"/>
</dbReference>
<dbReference type="RefSeq" id="WP_000656366.1">
    <property type="nucleotide sequence ID" value="NZ_CP009318.1"/>
</dbReference>
<dbReference type="SMR" id="C1ESZ7"/>
<dbReference type="GeneID" id="75083333"/>
<dbReference type="KEGG" id="bcx:BCA_0079"/>
<dbReference type="PATRIC" id="fig|572264.18.peg.130"/>
<dbReference type="Proteomes" id="UP000002210">
    <property type="component" value="Chromosome"/>
</dbReference>
<dbReference type="GO" id="GO:0005737">
    <property type="term" value="C:cytoplasm"/>
    <property type="evidence" value="ECO:0007669"/>
    <property type="project" value="UniProtKB-SubCell"/>
</dbReference>
<dbReference type="GO" id="GO:0044183">
    <property type="term" value="F:protein folding chaperone"/>
    <property type="evidence" value="ECO:0007669"/>
    <property type="project" value="TreeGrafter"/>
</dbReference>
<dbReference type="GO" id="GO:0051082">
    <property type="term" value="F:unfolded protein binding"/>
    <property type="evidence" value="ECO:0007669"/>
    <property type="project" value="UniProtKB-UniRule"/>
</dbReference>
<dbReference type="GO" id="GO:0042026">
    <property type="term" value="P:protein refolding"/>
    <property type="evidence" value="ECO:0007669"/>
    <property type="project" value="TreeGrafter"/>
</dbReference>
<dbReference type="CDD" id="cd00498">
    <property type="entry name" value="Hsp33"/>
    <property type="match status" value="1"/>
</dbReference>
<dbReference type="Gene3D" id="3.55.30.10">
    <property type="entry name" value="Hsp33 domain"/>
    <property type="match status" value="1"/>
</dbReference>
<dbReference type="Gene3D" id="3.90.1280.10">
    <property type="entry name" value="HSP33 redox switch-like"/>
    <property type="match status" value="1"/>
</dbReference>
<dbReference type="HAMAP" id="MF_00117">
    <property type="entry name" value="HslO"/>
    <property type="match status" value="1"/>
</dbReference>
<dbReference type="InterPro" id="IPR000397">
    <property type="entry name" value="Heat_shock_Hsp33"/>
</dbReference>
<dbReference type="InterPro" id="IPR016154">
    <property type="entry name" value="Heat_shock_Hsp33_C"/>
</dbReference>
<dbReference type="InterPro" id="IPR016153">
    <property type="entry name" value="Heat_shock_Hsp33_N"/>
</dbReference>
<dbReference type="NCBIfam" id="NF001033">
    <property type="entry name" value="PRK00114.1"/>
    <property type="match status" value="1"/>
</dbReference>
<dbReference type="PANTHER" id="PTHR30111">
    <property type="entry name" value="33 KDA CHAPERONIN"/>
    <property type="match status" value="1"/>
</dbReference>
<dbReference type="PANTHER" id="PTHR30111:SF1">
    <property type="entry name" value="33 KDA CHAPERONIN"/>
    <property type="match status" value="1"/>
</dbReference>
<dbReference type="Pfam" id="PF01430">
    <property type="entry name" value="HSP33"/>
    <property type="match status" value="1"/>
</dbReference>
<dbReference type="PIRSF" id="PIRSF005261">
    <property type="entry name" value="Heat_shock_Hsp33"/>
    <property type="match status" value="1"/>
</dbReference>
<dbReference type="SUPFAM" id="SSF64397">
    <property type="entry name" value="Hsp33 domain"/>
    <property type="match status" value="1"/>
</dbReference>
<dbReference type="SUPFAM" id="SSF118352">
    <property type="entry name" value="HSP33 redox switch-like"/>
    <property type="match status" value="1"/>
</dbReference>
<evidence type="ECO:0000255" key="1">
    <source>
        <dbReference type="HAMAP-Rule" id="MF_00117"/>
    </source>
</evidence>
<organism>
    <name type="scientific">Bacillus cereus (strain 03BB102)</name>
    <dbReference type="NCBI Taxonomy" id="572264"/>
    <lineage>
        <taxon>Bacteria</taxon>
        <taxon>Bacillati</taxon>
        <taxon>Bacillota</taxon>
        <taxon>Bacilli</taxon>
        <taxon>Bacillales</taxon>
        <taxon>Bacillaceae</taxon>
        <taxon>Bacillus</taxon>
        <taxon>Bacillus cereus group</taxon>
    </lineage>
</organism>
<comment type="function">
    <text evidence="1">Redox regulated molecular chaperone. Protects both thermally unfolding and oxidatively damaged proteins from irreversible aggregation. Plays an important role in the bacterial defense system toward oxidative stress.</text>
</comment>
<comment type="subcellular location">
    <subcellularLocation>
        <location evidence="1">Cytoplasm</location>
    </subcellularLocation>
</comment>
<comment type="PTM">
    <text evidence="1">Under oxidizing conditions two disulfide bonds are formed involving the reactive cysteines. Under reducing conditions zinc is bound to the reactive cysteines and the protein is inactive.</text>
</comment>
<comment type="similarity">
    <text evidence="1">Belongs to the HSP33 family.</text>
</comment>
<sequence>MKDYLVKALAFDGEVRAYSVRTTNTVSEAQRRHDTWRTASAALGRSLTAGTMMGAMLKGDQKLTIKVEGNGPIGPILVDAHANGDVRGYVTNPHVDFEGTEQGKLRVYQAVGTEGFVTVIKDIGMREPFIGQSPIVSGELGEDFTYYFAVSEQTPSSVGVGVLVNGDDSILAAGGFILQIMPGAQEETISFIEERLQKIPPVSTLIEQGLSPEELLYAVLGEDKVKVLETMDVQFNCTCSRERIESVLISLGKTELEQVREEEEETEVHCHFCNERYKFSKEDITNLIENL</sequence>